<gene>
    <name evidence="11" type="primary">PPR10</name>
    <name evidence="14" type="ORF">ZEAMMB73_Zm00001d036698</name>
</gene>
<comment type="function">
    <text evidence="4 5 6 9 10">Involved in chloroplast mRNA stability (PubMed:19424177, PubMed:21173259, PubMed:22156165). Binds specifically to two intergenic RNA regions of similar sequence located in the chloroplast atpH 5'-UTR and psaJ 3'-UTR, and serves as a barrier to RNA decay (PubMed:19424177). Binding to a specific site in the intergenic region of the chloroplast atpH is sufficient to block 5'-3' and 3'-5' exonucleases (PubMed:21173259). Acts as a protein barrier to block mRNA degradation by exonucleases, and defines processed mRNA termini in chloroplasts (PubMed:22156165). Remodels the structure of the atpH ribosome-binding site in a manner that can account for its ability to enhance translation (PubMed:21173259). Stabilizes a RNA 3'-end downstream from psaI (PubMed:30125002). Binds atpH RNA as a monomer (PubMed:25609698).</text>
</comment>
<comment type="subunit">
    <text evidence="7 8">Forms homodimers.</text>
</comment>
<comment type="interaction">
    <interactant intactId="EBI-16079897">
        <id>B8Y6I0</id>
    </interactant>
    <interactant intactId="EBI-16079897">
        <id>B8Y6I0</id>
        <label>PPR10</label>
    </interactant>
    <organismsDiffer>false</organismsDiffer>
    <experiments>3</experiments>
</comment>
<comment type="subcellular location">
    <subcellularLocation>
        <location evidence="4">Plastid</location>
        <location evidence="4">Chloroplast stroma</location>
    </subcellularLocation>
</comment>
<comment type="disruption phenotype">
    <text evidence="4">Yellow-green seedling phenotype (PubMed:19424177). Seedling lethality after the development of three leaves (PubMed:19424177). Defects in plastid mRNA metabolism and reduced levels of subunits of several photosynthetic enzyme complexes (PubMed:19424177).</text>
</comment>
<comment type="similarity">
    <text evidence="13">Belongs to the PPR family. P subfamily.</text>
</comment>
<accession>B8Y6I0</accession>
<dbReference type="EMBL" id="FJ490677">
    <property type="protein sequence ID" value="ACL01094.1"/>
    <property type="molecule type" value="mRNA"/>
</dbReference>
<dbReference type="EMBL" id="CM000782">
    <property type="protein sequence ID" value="AQK81740.1"/>
    <property type="molecule type" value="Genomic_DNA"/>
</dbReference>
<dbReference type="EMBL" id="BT063468">
    <property type="protein sequence ID" value="ACN28165.1"/>
    <property type="molecule type" value="mRNA"/>
</dbReference>
<dbReference type="RefSeq" id="NP_001157212.1">
    <property type="nucleotide sequence ID" value="NM_001163740.1"/>
</dbReference>
<dbReference type="PDB" id="4M57">
    <property type="method" value="X-ray"/>
    <property type="resolution" value="2.86 A"/>
    <property type="chains" value="A=61-786"/>
</dbReference>
<dbReference type="PDB" id="4M59">
    <property type="method" value="X-ray"/>
    <property type="resolution" value="2.46 A"/>
    <property type="chains" value="A/B=69-786"/>
</dbReference>
<dbReference type="PDB" id="4OE1">
    <property type="method" value="X-ray"/>
    <property type="resolution" value="2.80 A"/>
    <property type="chains" value="A/B=69-786"/>
</dbReference>
<dbReference type="PDBsum" id="4M57"/>
<dbReference type="PDBsum" id="4M59"/>
<dbReference type="PDBsum" id="4OE1"/>
<dbReference type="SMR" id="B8Y6I0"/>
<dbReference type="DIP" id="DIP-60592N"/>
<dbReference type="STRING" id="4577.B8Y6I0"/>
<dbReference type="PaxDb" id="4577-GRMZM2G177169_P01"/>
<dbReference type="EnsemblPlants" id="Zm00001eb274840_T001">
    <property type="protein sequence ID" value="Zm00001eb274840_P001"/>
    <property type="gene ID" value="Zm00001eb274840"/>
</dbReference>
<dbReference type="GeneID" id="100302579"/>
<dbReference type="Gramene" id="Zm00001eb274840_T001">
    <property type="protein sequence ID" value="Zm00001eb274840_P001"/>
    <property type="gene ID" value="Zm00001eb274840"/>
</dbReference>
<dbReference type="KEGG" id="zma:100302579"/>
<dbReference type="eggNOG" id="KOG4197">
    <property type="taxonomic scope" value="Eukaryota"/>
</dbReference>
<dbReference type="HOGENOM" id="CLU_002706_49_8_1"/>
<dbReference type="InParanoid" id="B8Y6I0"/>
<dbReference type="OMA" id="AMCGNRG"/>
<dbReference type="OrthoDB" id="185373at2759"/>
<dbReference type="EvolutionaryTrace" id="B8Y6I0"/>
<dbReference type="Proteomes" id="UP000007305">
    <property type="component" value="Chromosome 6"/>
</dbReference>
<dbReference type="ExpressionAtlas" id="B8Y6I0">
    <property type="expression patterns" value="baseline and differential"/>
</dbReference>
<dbReference type="GO" id="GO:0009570">
    <property type="term" value="C:chloroplast stroma"/>
    <property type="evidence" value="ECO:0000314"/>
    <property type="project" value="UniProtKB"/>
</dbReference>
<dbReference type="GO" id="GO:0042802">
    <property type="term" value="F:identical protein binding"/>
    <property type="evidence" value="ECO:0000353"/>
    <property type="project" value="IntAct"/>
</dbReference>
<dbReference type="GO" id="GO:0003729">
    <property type="term" value="F:mRNA binding"/>
    <property type="evidence" value="ECO:0000318"/>
    <property type="project" value="GO_Central"/>
</dbReference>
<dbReference type="GO" id="GO:0006397">
    <property type="term" value="P:mRNA processing"/>
    <property type="evidence" value="ECO:0007669"/>
    <property type="project" value="UniProtKB-KW"/>
</dbReference>
<dbReference type="GO" id="GO:0048255">
    <property type="term" value="P:mRNA stabilization"/>
    <property type="evidence" value="ECO:0000315"/>
    <property type="project" value="UniProtKB"/>
</dbReference>
<dbReference type="FunFam" id="1.25.40.10:FF:003615">
    <property type="entry name" value="Pentatricopeptide repeat-containing protein 10, chloroplastic"/>
    <property type="match status" value="1"/>
</dbReference>
<dbReference type="FunFam" id="1.25.40.10:FF:003614">
    <property type="entry name" value="Pentatricopeptide repeat-containing protein At1g12300, mitochondrial"/>
    <property type="match status" value="1"/>
</dbReference>
<dbReference type="FunFam" id="1.25.40.10:FF:000530">
    <property type="entry name" value="Pentatricopeptide repeat-containing protein At1g74850, chloroplastic"/>
    <property type="match status" value="1"/>
</dbReference>
<dbReference type="FunFam" id="1.25.40.10:FF:002531">
    <property type="entry name" value="Pentatricopeptide repeat-containing protein At3g23020"/>
    <property type="match status" value="1"/>
</dbReference>
<dbReference type="Gene3D" id="1.25.40.10">
    <property type="entry name" value="Tetratricopeptide repeat domain"/>
    <property type="match status" value="7"/>
</dbReference>
<dbReference type="InterPro" id="IPR002885">
    <property type="entry name" value="Pentatricopeptide_rpt"/>
</dbReference>
<dbReference type="InterPro" id="IPR011990">
    <property type="entry name" value="TPR-like_helical_dom_sf"/>
</dbReference>
<dbReference type="NCBIfam" id="TIGR00756">
    <property type="entry name" value="PPR"/>
    <property type="match status" value="13"/>
</dbReference>
<dbReference type="PANTHER" id="PTHR47447">
    <property type="entry name" value="OS03G0856100 PROTEIN"/>
    <property type="match status" value="1"/>
</dbReference>
<dbReference type="PANTHER" id="PTHR47447:SF17">
    <property type="entry name" value="OS12G0638900 PROTEIN"/>
    <property type="match status" value="1"/>
</dbReference>
<dbReference type="Pfam" id="PF01535">
    <property type="entry name" value="PPR"/>
    <property type="match status" value="3"/>
</dbReference>
<dbReference type="Pfam" id="PF12854">
    <property type="entry name" value="PPR_1"/>
    <property type="match status" value="2"/>
</dbReference>
<dbReference type="Pfam" id="PF13041">
    <property type="entry name" value="PPR_2"/>
    <property type="match status" value="4"/>
</dbReference>
<dbReference type="Pfam" id="PF13812">
    <property type="entry name" value="PPR_3"/>
    <property type="match status" value="2"/>
</dbReference>
<dbReference type="SUPFAM" id="SSF48452">
    <property type="entry name" value="TPR-like"/>
    <property type="match status" value="1"/>
</dbReference>
<dbReference type="PROSITE" id="PS51375">
    <property type="entry name" value="PPR"/>
    <property type="match status" value="18"/>
</dbReference>
<reference key="1">
    <citation type="journal article" date="2009" name="EMBO J.">
        <title>Site-specific binding of a PPR protein defines and stabilizes 5' and 3' mRNA termini in chloroplasts.</title>
        <authorList>
            <person name="Pfalz J."/>
            <person name="Bayraktar O.A."/>
            <person name="Prikryl J."/>
            <person name="Barkan A."/>
        </authorList>
    </citation>
    <scope>NUCLEOTIDE SEQUENCE [MRNA]</scope>
    <scope>FUNCTION</scope>
    <scope>SUBCELLULAR LOCATION</scope>
    <scope>DISRUPTION PHENOTYPE</scope>
</reference>
<reference key="2">
    <citation type="journal article" date="2009" name="Science">
        <title>The B73 maize genome: complexity, diversity, and dynamics.</title>
        <authorList>
            <person name="Schnable P.S."/>
            <person name="Ware D."/>
            <person name="Fulton R.S."/>
            <person name="Stein J.C."/>
            <person name="Wei F."/>
            <person name="Pasternak S."/>
            <person name="Liang C."/>
            <person name="Zhang J."/>
            <person name="Fulton L."/>
            <person name="Graves T.A."/>
            <person name="Minx P."/>
            <person name="Reily A.D."/>
            <person name="Courtney L."/>
            <person name="Kruchowski S.S."/>
            <person name="Tomlinson C."/>
            <person name="Strong C."/>
            <person name="Delehaunty K."/>
            <person name="Fronick C."/>
            <person name="Courtney B."/>
            <person name="Rock S.M."/>
            <person name="Belter E."/>
            <person name="Du F."/>
            <person name="Kim K."/>
            <person name="Abbott R.M."/>
            <person name="Cotton M."/>
            <person name="Levy A."/>
            <person name="Marchetto P."/>
            <person name="Ochoa K."/>
            <person name="Jackson S.M."/>
            <person name="Gillam B."/>
            <person name="Chen W."/>
            <person name="Yan L."/>
            <person name="Higginbotham J."/>
            <person name="Cardenas M."/>
            <person name="Waligorski J."/>
            <person name="Applebaum E."/>
            <person name="Phelps L."/>
            <person name="Falcone J."/>
            <person name="Kanchi K."/>
            <person name="Thane T."/>
            <person name="Scimone A."/>
            <person name="Thane N."/>
            <person name="Henke J."/>
            <person name="Wang T."/>
            <person name="Ruppert J."/>
            <person name="Shah N."/>
            <person name="Rotter K."/>
            <person name="Hodges J."/>
            <person name="Ingenthron E."/>
            <person name="Cordes M."/>
            <person name="Kohlberg S."/>
            <person name="Sgro J."/>
            <person name="Delgado B."/>
            <person name="Mead K."/>
            <person name="Chinwalla A."/>
            <person name="Leonard S."/>
            <person name="Crouse K."/>
            <person name="Collura K."/>
            <person name="Kudrna D."/>
            <person name="Currie J."/>
            <person name="He R."/>
            <person name="Angelova A."/>
            <person name="Rajasekar S."/>
            <person name="Mueller T."/>
            <person name="Lomeli R."/>
            <person name="Scara G."/>
            <person name="Ko A."/>
            <person name="Delaney K."/>
            <person name="Wissotski M."/>
            <person name="Lopez G."/>
            <person name="Campos D."/>
            <person name="Braidotti M."/>
            <person name="Ashley E."/>
            <person name="Golser W."/>
            <person name="Kim H."/>
            <person name="Lee S."/>
            <person name="Lin J."/>
            <person name="Dujmic Z."/>
            <person name="Kim W."/>
            <person name="Talag J."/>
            <person name="Zuccolo A."/>
            <person name="Fan C."/>
            <person name="Sebastian A."/>
            <person name="Kramer M."/>
            <person name="Spiegel L."/>
            <person name="Nascimento L."/>
            <person name="Zutavern T."/>
            <person name="Miller B."/>
            <person name="Ambroise C."/>
            <person name="Muller S."/>
            <person name="Spooner W."/>
            <person name="Narechania A."/>
            <person name="Ren L."/>
            <person name="Wei S."/>
            <person name="Kumari S."/>
            <person name="Faga B."/>
            <person name="Levy M.J."/>
            <person name="McMahan L."/>
            <person name="Van Buren P."/>
            <person name="Vaughn M.W."/>
            <person name="Ying K."/>
            <person name="Yeh C.-T."/>
            <person name="Emrich S.J."/>
            <person name="Jia Y."/>
            <person name="Kalyanaraman A."/>
            <person name="Hsia A.-P."/>
            <person name="Barbazuk W.B."/>
            <person name="Baucom R.S."/>
            <person name="Brutnell T.P."/>
            <person name="Carpita N.C."/>
            <person name="Chaparro C."/>
            <person name="Chia J.-M."/>
            <person name="Deragon J.-M."/>
            <person name="Estill J.C."/>
            <person name="Fu Y."/>
            <person name="Jeddeloh J.A."/>
            <person name="Han Y."/>
            <person name="Lee H."/>
            <person name="Li P."/>
            <person name="Lisch D.R."/>
            <person name="Liu S."/>
            <person name="Liu Z."/>
            <person name="Nagel D.H."/>
            <person name="McCann M.C."/>
            <person name="SanMiguel P."/>
            <person name="Myers A.M."/>
            <person name="Nettleton D."/>
            <person name="Nguyen J."/>
            <person name="Penning B.W."/>
            <person name="Ponnala L."/>
            <person name="Schneider K.L."/>
            <person name="Schwartz D.C."/>
            <person name="Sharma A."/>
            <person name="Soderlund C."/>
            <person name="Springer N.M."/>
            <person name="Sun Q."/>
            <person name="Wang H."/>
            <person name="Waterman M."/>
            <person name="Westerman R."/>
            <person name="Wolfgruber T.K."/>
            <person name="Yang L."/>
            <person name="Yu Y."/>
            <person name="Zhang L."/>
            <person name="Zhou S."/>
            <person name="Zhu Q."/>
            <person name="Bennetzen J.L."/>
            <person name="Dawe R.K."/>
            <person name="Jiang J."/>
            <person name="Jiang N."/>
            <person name="Presting G.G."/>
            <person name="Wessler S.R."/>
            <person name="Aluru S."/>
            <person name="Martienssen R.A."/>
            <person name="Clifton S.W."/>
            <person name="McCombie W.R."/>
            <person name="Wing R.A."/>
            <person name="Wilson R.K."/>
        </authorList>
    </citation>
    <scope>NUCLEOTIDE SEQUENCE [LARGE SCALE GENOMIC DNA]</scope>
    <source>
        <strain>cv. B73</strain>
    </source>
</reference>
<reference key="3">
    <citation type="journal article" date="2009" name="PLoS Genet.">
        <title>Sequencing, mapping, and analysis of 27,455 maize full-length cDNAs.</title>
        <authorList>
            <person name="Soderlund C."/>
            <person name="Descour A."/>
            <person name="Kudrna D."/>
            <person name="Bomhoff M."/>
            <person name="Boyd L."/>
            <person name="Currie J."/>
            <person name="Angelova A."/>
            <person name="Collura K."/>
            <person name="Wissotski M."/>
            <person name="Ashley E."/>
            <person name="Morrow D."/>
            <person name="Fernandes J."/>
            <person name="Walbot V."/>
            <person name="Yu Y."/>
        </authorList>
    </citation>
    <scope>NUCLEOTIDE SEQUENCE [LARGE SCALE MRNA]</scope>
    <source>
        <strain>cv. B73</strain>
    </source>
</reference>
<reference key="4">
    <citation type="journal article" date="2011" name="Proc. Natl. Acad. Sci. U.S.A.">
        <title>Mechanism of RNA stabilization and translational activation by a pentatricopeptide repeat protein.</title>
        <authorList>
            <person name="Prikryl J."/>
            <person name="Rojas M."/>
            <person name="Schuster G."/>
            <person name="Barkan A."/>
        </authorList>
    </citation>
    <scope>FUNCTION</scope>
</reference>
<reference key="5">
    <citation type="journal article" date="2012" name="Nucleic Acids Res.">
        <title>Protein-mediated protection as the predominant mechanism for defining processed mRNA termini in land plant chloroplasts.</title>
        <authorList>
            <person name="Zhelyazkova P."/>
            <person name="Hammani K."/>
            <person name="Rojas M."/>
            <person name="Voelker R."/>
            <person name="Vargas-Suarez M."/>
            <person name="Boerner T."/>
            <person name="Barkan A."/>
        </authorList>
    </citation>
    <scope>FUNCTION</scope>
</reference>
<reference key="6">
    <citation type="journal article" date="2015" name="Nucleic Acids Res.">
        <title>The solution structure of the pentatricopeptide repeat protein PPR10 upon binding atpH RNA.</title>
        <authorList>
            <person name="Gully B.S."/>
            <person name="Cowieson N."/>
            <person name="Stanley W.A."/>
            <person name="Shearston K."/>
            <person name="Small I.D."/>
            <person name="Barkan A."/>
            <person name="Bond C.S."/>
        </authorList>
    </citation>
    <scope>FUNCTION</scope>
</reference>
<reference key="7">
    <citation type="journal article" date="2018" name="Nucleic Acids Res.">
        <title>Unexpected functional versatility of the pentatricopeptide repeat proteins PGR3, PPR5 and PPR10.</title>
        <authorList>
            <person name="Rojas M."/>
            <person name="Ruwe H."/>
            <person name="Miranda R.G."/>
            <person name="Zoschke R."/>
            <person name="Hase N."/>
            <person name="Schmitz-Linneweber C."/>
            <person name="Barkan A."/>
        </authorList>
    </citation>
    <scope>FUNCTION</scope>
</reference>
<reference key="8">
    <citation type="journal article" date="2013" name="Nature">
        <title>Structural basis for the modular recognition of single-stranded RNA by PPR proteins.</title>
        <authorList>
            <person name="Yin P."/>
            <person name="Li Q."/>
            <person name="Yan C."/>
            <person name="Liu Y."/>
            <person name="Liu J."/>
            <person name="Yu F."/>
            <person name="Wang Z."/>
            <person name="Long J."/>
            <person name="He J."/>
            <person name="Wang H.W."/>
            <person name="Wang J."/>
            <person name="Zhu J.K."/>
            <person name="Shi Y."/>
            <person name="Yan N."/>
        </authorList>
    </citation>
    <scope>X-RAY CRYSTALLOGRAPHY (2.46 ANGSTROMS) OF 61-786 IN COMPLEX WITH RNA</scope>
    <scope>HOMODIMER</scope>
</reference>
<reference key="9">
    <citation type="journal article" date="2014" name="J. Biol. Chem.">
        <title>Examination of the dimerization states of the single-stranded RNA recognition protein pentatricopeptide repeat 10 (PPR10).</title>
        <authorList>
            <person name="Li Q."/>
            <person name="Yan C."/>
            <person name="Xu H."/>
            <person name="Wang Z."/>
            <person name="Long J."/>
            <person name="Li W."/>
            <person name="Wu J."/>
            <person name="Yin P."/>
            <person name="Yan N."/>
        </authorList>
    </citation>
    <scope>X-RAY CRYSTALLOGRAPHY (2.80 ANGSTROMS) OF 69-786 IN COMPLEX WITH RNA</scope>
    <scope>HOMODIMER</scope>
</reference>
<keyword id="KW-0002">3D-structure</keyword>
<keyword id="KW-0150">Chloroplast</keyword>
<keyword id="KW-0507">mRNA processing</keyword>
<keyword id="KW-0934">Plastid</keyword>
<keyword id="KW-1185">Reference proteome</keyword>
<keyword id="KW-0677">Repeat</keyword>
<keyword id="KW-0694">RNA-binding</keyword>
<keyword id="KW-0809">Transit peptide</keyword>
<evidence type="ECO:0000255" key="1"/>
<evidence type="ECO:0000255" key="2">
    <source>
        <dbReference type="PROSITE-ProRule" id="PRU00708"/>
    </source>
</evidence>
<evidence type="ECO:0000256" key="3">
    <source>
        <dbReference type="SAM" id="MobiDB-lite"/>
    </source>
</evidence>
<evidence type="ECO:0000269" key="4">
    <source>
    </source>
</evidence>
<evidence type="ECO:0000269" key="5">
    <source>
    </source>
</evidence>
<evidence type="ECO:0000269" key="6">
    <source>
    </source>
</evidence>
<evidence type="ECO:0000269" key="7">
    <source>
    </source>
</evidence>
<evidence type="ECO:0000269" key="8">
    <source>
    </source>
</evidence>
<evidence type="ECO:0000269" key="9">
    <source>
    </source>
</evidence>
<evidence type="ECO:0000269" key="10">
    <source>
    </source>
</evidence>
<evidence type="ECO:0000303" key="11">
    <source>
    </source>
</evidence>
<evidence type="ECO:0000303" key="12">
    <source>
    </source>
</evidence>
<evidence type="ECO:0000305" key="13"/>
<evidence type="ECO:0000312" key="14">
    <source>
        <dbReference type="EMBL" id="AQK81740.1"/>
    </source>
</evidence>
<evidence type="ECO:0007829" key="15">
    <source>
        <dbReference type="PDB" id="4M57"/>
    </source>
</evidence>
<evidence type="ECO:0007829" key="16">
    <source>
        <dbReference type="PDB" id="4M59"/>
    </source>
</evidence>
<feature type="transit peptide" description="Chloroplast" evidence="1">
    <location>
        <begin position="1"/>
        <end position="95"/>
    </location>
</feature>
<feature type="chain" id="PRO_0000446264" description="Pentatricopeptide repeat-containing protein 10, chloroplastic">
    <location>
        <begin position="96"/>
        <end position="786"/>
    </location>
</feature>
<feature type="repeat" description="PPR 1" evidence="2">
    <location>
        <begin position="137"/>
        <end position="167"/>
    </location>
</feature>
<feature type="repeat" description="PPR 2" evidence="2">
    <location>
        <begin position="173"/>
        <end position="207"/>
    </location>
</feature>
<feature type="repeat" description="PPR 3" evidence="2">
    <location>
        <begin position="208"/>
        <end position="243"/>
    </location>
</feature>
<feature type="repeat" description="PPR 4" evidence="2">
    <location>
        <begin position="244"/>
        <end position="278"/>
    </location>
</feature>
<feature type="repeat" description="PPR 5" evidence="2">
    <location>
        <begin position="279"/>
        <end position="313"/>
    </location>
</feature>
<feature type="repeat" description="PPR 6" evidence="2">
    <location>
        <begin position="314"/>
        <end position="348"/>
    </location>
</feature>
<feature type="repeat" description="PPR 7" evidence="2">
    <location>
        <begin position="349"/>
        <end position="383"/>
    </location>
</feature>
<feature type="repeat" description="PPR 8" evidence="2">
    <location>
        <begin position="384"/>
        <end position="418"/>
    </location>
</feature>
<feature type="repeat" description="PPR 9" evidence="2">
    <location>
        <begin position="419"/>
        <end position="453"/>
    </location>
</feature>
<feature type="repeat" description="PPR 10" evidence="2">
    <location>
        <begin position="454"/>
        <end position="488"/>
    </location>
</feature>
<feature type="repeat" description="PPR 11" evidence="2">
    <location>
        <begin position="489"/>
        <end position="523"/>
    </location>
</feature>
<feature type="repeat" description="PPR 12" evidence="2">
    <location>
        <begin position="524"/>
        <end position="558"/>
    </location>
</feature>
<feature type="repeat" description="PPR 13" evidence="2">
    <location>
        <begin position="560"/>
        <end position="594"/>
    </location>
</feature>
<feature type="repeat" description="PPR 14" evidence="2">
    <location>
        <begin position="595"/>
        <end position="629"/>
    </location>
</feature>
<feature type="repeat" description="PPR 15" evidence="2">
    <location>
        <begin position="630"/>
        <end position="664"/>
    </location>
</feature>
<feature type="repeat" description="PPR 16" evidence="2">
    <location>
        <begin position="666"/>
        <end position="700"/>
    </location>
</feature>
<feature type="repeat" description="PPR 17" evidence="2">
    <location>
        <begin position="701"/>
        <end position="735"/>
    </location>
</feature>
<feature type="repeat" description="PPR 18" evidence="2">
    <location>
        <begin position="736"/>
        <end position="770"/>
    </location>
</feature>
<feature type="region of interest" description="Disordered" evidence="3">
    <location>
        <begin position="1"/>
        <end position="71"/>
    </location>
</feature>
<feature type="compositionally biased region" description="Pro residues" evidence="3">
    <location>
        <begin position="27"/>
        <end position="36"/>
    </location>
</feature>
<feature type="compositionally biased region" description="Low complexity" evidence="3">
    <location>
        <begin position="37"/>
        <end position="50"/>
    </location>
</feature>
<feature type="helix" evidence="16">
    <location>
        <begin position="76"/>
        <end position="84"/>
    </location>
</feature>
<feature type="helix" evidence="16">
    <location>
        <begin position="88"/>
        <end position="90"/>
    </location>
</feature>
<feature type="helix" evidence="16">
    <location>
        <begin position="91"/>
        <end position="97"/>
    </location>
</feature>
<feature type="helix" evidence="16">
    <location>
        <begin position="99"/>
        <end position="103"/>
    </location>
</feature>
<feature type="helix" evidence="16">
    <location>
        <begin position="107"/>
        <end position="115"/>
    </location>
</feature>
<feature type="turn" evidence="16">
    <location>
        <begin position="116"/>
        <end position="118"/>
    </location>
</feature>
<feature type="helix" evidence="16">
    <location>
        <begin position="120"/>
        <end position="133"/>
    </location>
</feature>
<feature type="helix" evidence="16">
    <location>
        <begin position="138"/>
        <end position="150"/>
    </location>
</feature>
<feature type="helix" evidence="16">
    <location>
        <begin position="154"/>
        <end position="163"/>
    </location>
</feature>
<feature type="helix" evidence="15">
    <location>
        <begin position="169"/>
        <end position="171"/>
    </location>
</feature>
<feature type="helix" evidence="16">
    <location>
        <begin position="174"/>
        <end position="185"/>
    </location>
</feature>
<feature type="turn" evidence="16">
    <location>
        <begin position="186"/>
        <end position="188"/>
    </location>
</feature>
<feature type="helix" evidence="16">
    <location>
        <begin position="190"/>
        <end position="200"/>
    </location>
</feature>
<feature type="turn" evidence="16">
    <location>
        <begin position="201"/>
        <end position="204"/>
    </location>
</feature>
<feature type="helix" evidence="16">
    <location>
        <begin position="209"/>
        <end position="219"/>
    </location>
</feature>
<feature type="turn" evidence="16">
    <location>
        <begin position="220"/>
        <end position="222"/>
    </location>
</feature>
<feature type="helix" evidence="16">
    <location>
        <begin position="226"/>
        <end position="238"/>
    </location>
</feature>
<feature type="helix" evidence="16">
    <location>
        <begin position="245"/>
        <end position="256"/>
    </location>
</feature>
<feature type="turn" evidence="16">
    <location>
        <begin position="257"/>
        <end position="259"/>
    </location>
</feature>
<feature type="helix" evidence="16">
    <location>
        <begin position="261"/>
        <end position="272"/>
    </location>
</feature>
<feature type="turn" evidence="16">
    <location>
        <begin position="273"/>
        <end position="275"/>
    </location>
</feature>
<feature type="helix" evidence="16">
    <location>
        <begin position="280"/>
        <end position="292"/>
    </location>
</feature>
<feature type="helix" evidence="16">
    <location>
        <begin position="296"/>
        <end position="308"/>
    </location>
</feature>
<feature type="helix" evidence="16">
    <location>
        <begin position="315"/>
        <end position="323"/>
    </location>
</feature>
<feature type="turn" evidence="16">
    <location>
        <begin position="325"/>
        <end position="327"/>
    </location>
</feature>
<feature type="helix" evidence="16">
    <location>
        <begin position="334"/>
        <end position="340"/>
    </location>
</feature>
<feature type="helix" evidence="16">
    <location>
        <begin position="350"/>
        <end position="363"/>
    </location>
</feature>
<feature type="helix" evidence="16">
    <location>
        <begin position="366"/>
        <end position="378"/>
    </location>
</feature>
<feature type="helix" evidence="16">
    <location>
        <begin position="385"/>
        <end position="396"/>
    </location>
</feature>
<feature type="turn" evidence="16">
    <location>
        <begin position="397"/>
        <end position="399"/>
    </location>
</feature>
<feature type="helix" evidence="16">
    <location>
        <begin position="401"/>
        <end position="414"/>
    </location>
</feature>
<feature type="helix" evidence="16">
    <location>
        <begin position="420"/>
        <end position="427"/>
    </location>
</feature>
<feature type="helix" evidence="16">
    <location>
        <begin position="435"/>
        <end position="448"/>
    </location>
</feature>
<feature type="helix" evidence="16">
    <location>
        <begin position="455"/>
        <end position="468"/>
    </location>
</feature>
<feature type="helix" evidence="16">
    <location>
        <begin position="471"/>
        <end position="481"/>
    </location>
</feature>
<feature type="turn" evidence="16">
    <location>
        <begin position="482"/>
        <end position="485"/>
    </location>
</feature>
<feature type="helix" evidence="16">
    <location>
        <begin position="490"/>
        <end position="503"/>
    </location>
</feature>
<feature type="helix" evidence="16">
    <location>
        <begin position="506"/>
        <end position="517"/>
    </location>
</feature>
<feature type="turn" evidence="16">
    <location>
        <begin position="518"/>
        <end position="520"/>
    </location>
</feature>
<feature type="helix" evidence="16">
    <location>
        <begin position="526"/>
        <end position="536"/>
    </location>
</feature>
<feature type="turn" evidence="16">
    <location>
        <begin position="537"/>
        <end position="539"/>
    </location>
</feature>
<feature type="helix" evidence="16">
    <location>
        <begin position="541"/>
        <end position="551"/>
    </location>
</feature>
<feature type="strand" evidence="16">
    <location>
        <begin position="554"/>
        <end position="557"/>
    </location>
</feature>
<feature type="helix" evidence="16">
    <location>
        <begin position="561"/>
        <end position="572"/>
    </location>
</feature>
<feature type="turn" evidence="16">
    <location>
        <begin position="573"/>
        <end position="575"/>
    </location>
</feature>
<feature type="helix" evidence="16">
    <location>
        <begin position="577"/>
        <end position="587"/>
    </location>
</feature>
<feature type="turn" evidence="16">
    <location>
        <begin position="588"/>
        <end position="591"/>
    </location>
</feature>
<feature type="helix" evidence="16">
    <location>
        <begin position="596"/>
        <end position="607"/>
    </location>
</feature>
<feature type="turn" evidence="16">
    <location>
        <begin position="608"/>
        <end position="610"/>
    </location>
</feature>
<feature type="helix" evidence="16">
    <location>
        <begin position="612"/>
        <end position="623"/>
    </location>
</feature>
<feature type="turn" evidence="16">
    <location>
        <begin position="624"/>
        <end position="626"/>
    </location>
</feature>
<feature type="helix" evidence="16">
    <location>
        <begin position="631"/>
        <end position="643"/>
    </location>
</feature>
<feature type="helix" evidence="16">
    <location>
        <begin position="648"/>
        <end position="658"/>
    </location>
</feature>
<feature type="helix" evidence="16">
    <location>
        <begin position="667"/>
        <end position="680"/>
    </location>
</feature>
<feature type="helix" evidence="16">
    <location>
        <begin position="683"/>
        <end position="695"/>
    </location>
</feature>
<feature type="helix" evidence="16">
    <location>
        <begin position="702"/>
        <end position="713"/>
    </location>
</feature>
<feature type="strand" evidence="16">
    <location>
        <begin position="714"/>
        <end position="716"/>
    </location>
</feature>
<feature type="turn" evidence="16">
    <location>
        <begin position="719"/>
        <end position="724"/>
    </location>
</feature>
<feature type="helix" evidence="16">
    <location>
        <begin position="725"/>
        <end position="727"/>
    </location>
</feature>
<feature type="helix" evidence="16">
    <location>
        <begin position="729"/>
        <end position="731"/>
    </location>
</feature>
<feature type="helix" evidence="16">
    <location>
        <begin position="737"/>
        <end position="747"/>
    </location>
</feature>
<feature type="helix" evidence="16">
    <location>
        <begin position="754"/>
        <end position="761"/>
    </location>
</feature>
<feature type="helix" evidence="16">
    <location>
        <begin position="778"/>
        <end position="781"/>
    </location>
</feature>
<name>PPR10_MAIZE</name>
<protein>
    <recommendedName>
        <fullName evidence="11">Pentatricopeptide repeat-containing protein 10, chloroplastic</fullName>
        <shortName evidence="12">ZmPPR10</shortName>
    </recommendedName>
</protein>
<proteinExistence type="evidence at protein level"/>
<sequence>MEATGRGLFPNKPTLPAGPRKRGPLLPAAPPPPSPSSLPLDSLLLHLTAPAPAPAPAPRRSHQTPTPPHSFLSPDAQVLVLAISSHPLPTLAAFLASRRDELLRADITSLLKALELSGHWEWALALLRWAGKEGAADASALEMVVRALGREGQHDAVCALLDETPLPPGSRLDVRAYTTVLHALSRAGRYERALELFAELRRQGVAPTLVTYNVVLDVYGRMGRSWPRIVALLDEMRAAGVEPDGFTASTVIAACCRDGLVDEAVAFFEDLKARGHAPCVVTYNALLQVFGKAGNYTEALRVLGEMEQNGCQPDAVTYNELAGTYARAGFFEEAARCLDTMASKGLLPNAFTYNTVMTAYGNVGKVDEALALFDQMKKTGFVPNVNTYNLVLGMLGKKSRFTVMLEMLGEMSRSGCTPNRVTWNTMLAVCGKRGMEDYVTRVLEGMRSCGVELSRDTYNTLIAAYGRCGSRTNAFKMYNEMTSAGFTPCITTYNALLNVLSRQGDWSTAQSIVSKMRTKGFKPNEQSYSLLLQCYAKGGNVAGIAAIENEVYGSGAVFPSWVILRTLVIANFKCRRLDGMETAFQEVKARGYNPDLVIFNSMLSIYAKNGMYSKATEVFDSIKRSGLSPDLITYNSLMDMYAKCSESWEAEKILNQLKCSQTMKPDVVSYNTVINGFCKQGLVKEAQRVLSEMVADGMAPCAVTYHTLVGGYSSLEMFSEAREVIGYMVQHGLKPMELTYRRVVESYCRAKRFEEARGFLSEVSETDLDFDKKALEAYIEDAQFGR</sequence>
<organism>
    <name type="scientific">Zea mays</name>
    <name type="common">Maize</name>
    <dbReference type="NCBI Taxonomy" id="4577"/>
    <lineage>
        <taxon>Eukaryota</taxon>
        <taxon>Viridiplantae</taxon>
        <taxon>Streptophyta</taxon>
        <taxon>Embryophyta</taxon>
        <taxon>Tracheophyta</taxon>
        <taxon>Spermatophyta</taxon>
        <taxon>Magnoliopsida</taxon>
        <taxon>Liliopsida</taxon>
        <taxon>Poales</taxon>
        <taxon>Poaceae</taxon>
        <taxon>PACMAD clade</taxon>
        <taxon>Panicoideae</taxon>
        <taxon>Andropogonodae</taxon>
        <taxon>Andropogoneae</taxon>
        <taxon>Tripsacinae</taxon>
        <taxon>Zea</taxon>
    </lineage>
</organism>